<feature type="chain" id="PRO_0000171734" description="tRNA-specific adenosine deaminase">
    <location>
        <begin position="1"/>
        <end position="167"/>
    </location>
</feature>
<feature type="domain" description="CMP/dCMP-type deaminase" evidence="2">
    <location>
        <begin position="6"/>
        <end position="117"/>
    </location>
</feature>
<feature type="active site" description="Proton donor" evidence="1">
    <location>
        <position position="59"/>
    </location>
</feature>
<feature type="binding site" evidence="1">
    <location>
        <position position="57"/>
    </location>
    <ligand>
        <name>Zn(2+)</name>
        <dbReference type="ChEBI" id="CHEBI:29105"/>
        <note>catalytic</note>
    </ligand>
</feature>
<feature type="binding site" evidence="1">
    <location>
        <position position="87"/>
    </location>
    <ligand>
        <name>Zn(2+)</name>
        <dbReference type="ChEBI" id="CHEBI:29105"/>
        <note>catalytic</note>
    </ligand>
</feature>
<feature type="binding site" evidence="1">
    <location>
        <position position="90"/>
    </location>
    <ligand>
        <name>Zn(2+)</name>
        <dbReference type="ChEBI" id="CHEBI:29105"/>
        <note>catalytic</note>
    </ligand>
</feature>
<proteinExistence type="inferred from homology"/>
<name>TADA_ECO57</name>
<sequence>MSEVEFSHEYWMRHAMTLAKRAWDEREVPVGAVLVHNNRVIGEGWNRPIGRHDPTAHAEIMALRQGGLVMQNYRLIDATLYVTLEPCVMCAGAMIHSRIGRVVFGARDAKTGAAGSLMDVLHHPGMNHRVEITEGILADECAALLSDFFRMRRQEIKAQKKAQSSTD</sequence>
<evidence type="ECO:0000255" key="1">
    <source>
        <dbReference type="HAMAP-Rule" id="MF_00972"/>
    </source>
</evidence>
<evidence type="ECO:0000255" key="2">
    <source>
        <dbReference type="PROSITE-ProRule" id="PRU01083"/>
    </source>
</evidence>
<evidence type="ECO:0000305" key="3"/>
<gene>
    <name evidence="1" type="primary">tadA</name>
    <name type="ordered locus">Z3839</name>
    <name type="ordered locus">ECs3425</name>
</gene>
<comment type="function">
    <text evidence="1">Catalyzes the deamination of adenosine to inosine at the wobble position 34 of tRNA(Arg2).</text>
</comment>
<comment type="catalytic activity">
    <reaction evidence="1">
        <text>adenosine(34) in tRNA + H2O + H(+) = inosine(34) in tRNA + NH4(+)</text>
        <dbReference type="Rhea" id="RHEA:43168"/>
        <dbReference type="Rhea" id="RHEA-COMP:10373"/>
        <dbReference type="Rhea" id="RHEA-COMP:10374"/>
        <dbReference type="ChEBI" id="CHEBI:15377"/>
        <dbReference type="ChEBI" id="CHEBI:15378"/>
        <dbReference type="ChEBI" id="CHEBI:28938"/>
        <dbReference type="ChEBI" id="CHEBI:74411"/>
        <dbReference type="ChEBI" id="CHEBI:82852"/>
        <dbReference type="EC" id="3.5.4.33"/>
    </reaction>
</comment>
<comment type="cofactor">
    <cofactor evidence="1">
        <name>Zn(2+)</name>
        <dbReference type="ChEBI" id="CHEBI:29105"/>
    </cofactor>
    <text evidence="1">Binds 1 zinc ion per subunit.</text>
</comment>
<comment type="subunit">
    <text evidence="1">Homodimer.</text>
</comment>
<comment type="similarity">
    <text evidence="1">Belongs to the cytidine and deoxycytidylate deaminase family.</text>
</comment>
<comment type="sequence caution" evidence="3">
    <conflict type="erroneous initiation">
        <sequence resource="EMBL-CDS" id="AAG57673"/>
    </conflict>
    <text>Extended N-terminus.</text>
</comment>
<keyword id="KW-0378">Hydrolase</keyword>
<keyword id="KW-0479">Metal-binding</keyword>
<keyword id="KW-1185">Reference proteome</keyword>
<keyword id="KW-0819">tRNA processing</keyword>
<keyword id="KW-0862">Zinc</keyword>
<reference key="1">
    <citation type="journal article" date="2001" name="Nature">
        <title>Genome sequence of enterohaemorrhagic Escherichia coli O157:H7.</title>
        <authorList>
            <person name="Perna N.T."/>
            <person name="Plunkett G. III"/>
            <person name="Burland V."/>
            <person name="Mau B."/>
            <person name="Glasner J.D."/>
            <person name="Rose D.J."/>
            <person name="Mayhew G.F."/>
            <person name="Evans P.S."/>
            <person name="Gregor J."/>
            <person name="Kirkpatrick H.A."/>
            <person name="Posfai G."/>
            <person name="Hackett J."/>
            <person name="Klink S."/>
            <person name="Boutin A."/>
            <person name="Shao Y."/>
            <person name="Miller L."/>
            <person name="Grotbeck E.J."/>
            <person name="Davis N.W."/>
            <person name="Lim A."/>
            <person name="Dimalanta E.T."/>
            <person name="Potamousis K."/>
            <person name="Apodaca J."/>
            <person name="Anantharaman T.S."/>
            <person name="Lin J."/>
            <person name="Yen G."/>
            <person name="Schwartz D.C."/>
            <person name="Welch R.A."/>
            <person name="Blattner F.R."/>
        </authorList>
    </citation>
    <scope>NUCLEOTIDE SEQUENCE [LARGE SCALE GENOMIC DNA]</scope>
    <source>
        <strain>O157:H7 / EDL933 / ATCC 700927 / EHEC</strain>
    </source>
</reference>
<reference key="2">
    <citation type="journal article" date="2001" name="DNA Res.">
        <title>Complete genome sequence of enterohemorrhagic Escherichia coli O157:H7 and genomic comparison with a laboratory strain K-12.</title>
        <authorList>
            <person name="Hayashi T."/>
            <person name="Makino K."/>
            <person name="Ohnishi M."/>
            <person name="Kurokawa K."/>
            <person name="Ishii K."/>
            <person name="Yokoyama K."/>
            <person name="Han C.-G."/>
            <person name="Ohtsubo E."/>
            <person name="Nakayama K."/>
            <person name="Murata T."/>
            <person name="Tanaka M."/>
            <person name="Tobe T."/>
            <person name="Iida T."/>
            <person name="Takami H."/>
            <person name="Honda T."/>
            <person name="Sasakawa C."/>
            <person name="Ogasawara N."/>
            <person name="Yasunaga T."/>
            <person name="Kuhara S."/>
            <person name="Shiba T."/>
            <person name="Hattori M."/>
            <person name="Shinagawa H."/>
        </authorList>
    </citation>
    <scope>NUCLEOTIDE SEQUENCE [LARGE SCALE GENOMIC DNA]</scope>
    <source>
        <strain>O157:H7 / Sakai / RIMD 0509952 / EHEC</strain>
    </source>
</reference>
<protein>
    <recommendedName>
        <fullName evidence="1">tRNA-specific adenosine deaminase</fullName>
        <ecNumber evidence="1">3.5.4.33</ecNumber>
    </recommendedName>
</protein>
<organism>
    <name type="scientific">Escherichia coli O157:H7</name>
    <dbReference type="NCBI Taxonomy" id="83334"/>
    <lineage>
        <taxon>Bacteria</taxon>
        <taxon>Pseudomonadati</taxon>
        <taxon>Pseudomonadota</taxon>
        <taxon>Gammaproteobacteria</taxon>
        <taxon>Enterobacterales</taxon>
        <taxon>Enterobacteriaceae</taxon>
        <taxon>Escherichia</taxon>
    </lineage>
</organism>
<accession>Q8XA44</accession>
<accession>Q7ABK3</accession>
<dbReference type="EC" id="3.5.4.33" evidence="1"/>
<dbReference type="EMBL" id="AE005174">
    <property type="protein sequence ID" value="AAG57673.1"/>
    <property type="status" value="ALT_INIT"/>
    <property type="molecule type" value="Genomic_DNA"/>
</dbReference>
<dbReference type="EMBL" id="BA000007">
    <property type="protein sequence ID" value="BAB36848.2"/>
    <property type="molecule type" value="Genomic_DNA"/>
</dbReference>
<dbReference type="PIR" id="A91057">
    <property type="entry name" value="A91057"/>
</dbReference>
<dbReference type="PIR" id="E85901">
    <property type="entry name" value="E85901"/>
</dbReference>
<dbReference type="RefSeq" id="NP_311452.2">
    <property type="nucleotide sequence ID" value="NC_002695.1"/>
</dbReference>
<dbReference type="RefSeq" id="WP_001301544.1">
    <property type="nucleotide sequence ID" value="NZ_VOAI01000001.1"/>
</dbReference>
<dbReference type="SMR" id="Q8XA44"/>
<dbReference type="STRING" id="155864.Z3839"/>
<dbReference type="GeneID" id="75172672"/>
<dbReference type="GeneID" id="914909"/>
<dbReference type="KEGG" id="ece:Z3839"/>
<dbReference type="KEGG" id="ecs:ECs_3425"/>
<dbReference type="PATRIC" id="fig|386585.9.peg.3579"/>
<dbReference type="eggNOG" id="COG0590">
    <property type="taxonomic scope" value="Bacteria"/>
</dbReference>
<dbReference type="HOGENOM" id="CLU_025810_3_0_6"/>
<dbReference type="OMA" id="PCQMCAG"/>
<dbReference type="Proteomes" id="UP000000558">
    <property type="component" value="Chromosome"/>
</dbReference>
<dbReference type="Proteomes" id="UP000002519">
    <property type="component" value="Chromosome"/>
</dbReference>
<dbReference type="GO" id="GO:0052717">
    <property type="term" value="F:tRNA-specific adenosine-34 deaminase activity"/>
    <property type="evidence" value="ECO:0007669"/>
    <property type="project" value="UniProtKB-UniRule"/>
</dbReference>
<dbReference type="GO" id="GO:0008270">
    <property type="term" value="F:zinc ion binding"/>
    <property type="evidence" value="ECO:0007669"/>
    <property type="project" value="UniProtKB-UniRule"/>
</dbReference>
<dbReference type="GO" id="GO:0002100">
    <property type="term" value="P:tRNA wobble adenosine to inosine editing"/>
    <property type="evidence" value="ECO:0007669"/>
    <property type="project" value="UniProtKB-UniRule"/>
</dbReference>
<dbReference type="CDD" id="cd01285">
    <property type="entry name" value="nucleoside_deaminase"/>
    <property type="match status" value="1"/>
</dbReference>
<dbReference type="FunFam" id="3.40.140.10:FF:000005">
    <property type="entry name" value="tRNA-specific adenosine deaminase"/>
    <property type="match status" value="1"/>
</dbReference>
<dbReference type="Gene3D" id="3.40.140.10">
    <property type="entry name" value="Cytidine Deaminase, domain 2"/>
    <property type="match status" value="1"/>
</dbReference>
<dbReference type="HAMAP" id="MF_00972">
    <property type="entry name" value="tRNA_aden_deaminase"/>
    <property type="match status" value="1"/>
</dbReference>
<dbReference type="InterPro" id="IPR016192">
    <property type="entry name" value="APOBEC/CMP_deaminase_Zn-bd"/>
</dbReference>
<dbReference type="InterPro" id="IPR002125">
    <property type="entry name" value="CMP_dCMP_dom"/>
</dbReference>
<dbReference type="InterPro" id="IPR016193">
    <property type="entry name" value="Cytidine_deaminase-like"/>
</dbReference>
<dbReference type="InterPro" id="IPR028883">
    <property type="entry name" value="tRNA_aden_deaminase"/>
</dbReference>
<dbReference type="NCBIfam" id="NF008113">
    <property type="entry name" value="PRK10860.1"/>
    <property type="match status" value="1"/>
</dbReference>
<dbReference type="PANTHER" id="PTHR11079">
    <property type="entry name" value="CYTOSINE DEAMINASE FAMILY MEMBER"/>
    <property type="match status" value="1"/>
</dbReference>
<dbReference type="PANTHER" id="PTHR11079:SF202">
    <property type="entry name" value="TRNA-SPECIFIC ADENOSINE DEAMINASE"/>
    <property type="match status" value="1"/>
</dbReference>
<dbReference type="Pfam" id="PF14437">
    <property type="entry name" value="MafB19-deam"/>
    <property type="match status" value="1"/>
</dbReference>
<dbReference type="SUPFAM" id="SSF53927">
    <property type="entry name" value="Cytidine deaminase-like"/>
    <property type="match status" value="1"/>
</dbReference>
<dbReference type="PROSITE" id="PS00903">
    <property type="entry name" value="CYT_DCMP_DEAMINASES_1"/>
    <property type="match status" value="1"/>
</dbReference>
<dbReference type="PROSITE" id="PS51747">
    <property type="entry name" value="CYT_DCMP_DEAMINASES_2"/>
    <property type="match status" value="1"/>
</dbReference>